<accession>Q9A7X8</accession>
<feature type="chain" id="PRO_0000166489" description="Potassium-transporting ATPase potassium-binding subunit">
    <location>
        <begin position="1"/>
        <end position="570"/>
    </location>
</feature>
<feature type="transmembrane region" description="Helical" evidence="1">
    <location>
        <begin position="7"/>
        <end position="27"/>
    </location>
</feature>
<feature type="transmembrane region" description="Helical" evidence="1">
    <location>
        <begin position="65"/>
        <end position="85"/>
    </location>
</feature>
<feature type="transmembrane region" description="Helical" evidence="1">
    <location>
        <begin position="95"/>
        <end position="115"/>
    </location>
</feature>
<feature type="transmembrane region" description="Helical" evidence="1">
    <location>
        <begin position="135"/>
        <end position="155"/>
    </location>
</feature>
<feature type="transmembrane region" description="Helical" evidence="1">
    <location>
        <begin position="179"/>
        <end position="199"/>
    </location>
</feature>
<feature type="transmembrane region" description="Helical" evidence="1">
    <location>
        <begin position="254"/>
        <end position="274"/>
    </location>
</feature>
<feature type="transmembrane region" description="Helical" evidence="1">
    <location>
        <begin position="286"/>
        <end position="306"/>
    </location>
</feature>
<feature type="transmembrane region" description="Helical" evidence="1">
    <location>
        <begin position="383"/>
        <end position="403"/>
    </location>
</feature>
<feature type="transmembrane region" description="Helical" evidence="1">
    <location>
        <begin position="422"/>
        <end position="442"/>
    </location>
</feature>
<feature type="transmembrane region" description="Helical" evidence="1">
    <location>
        <begin position="489"/>
        <end position="509"/>
    </location>
</feature>
<feature type="transmembrane region" description="Helical" evidence="1">
    <location>
        <begin position="528"/>
        <end position="548"/>
    </location>
</feature>
<gene>
    <name evidence="1" type="primary">kdpA</name>
    <name type="ordered locus">CC_1591</name>
</gene>
<organism>
    <name type="scientific">Caulobacter vibrioides (strain ATCC 19089 / CIP 103742 / CB 15)</name>
    <name type="common">Caulobacter crescentus</name>
    <dbReference type="NCBI Taxonomy" id="190650"/>
    <lineage>
        <taxon>Bacteria</taxon>
        <taxon>Pseudomonadati</taxon>
        <taxon>Pseudomonadota</taxon>
        <taxon>Alphaproteobacteria</taxon>
        <taxon>Caulobacterales</taxon>
        <taxon>Caulobacteraceae</taxon>
        <taxon>Caulobacter</taxon>
    </lineage>
</organism>
<sequence length="570" mass="59271">MTWQGWAEIALTLSLAVAIGWPLGVFLSRVWNGEKTFLDPVMRPVEGLFYKACGVDPSKSQSWHAYALALLAFNLIGFVFVYAVLRLQGVLPLNPQGFPGLSGHLAFNTAISFITNTNWQSYAGETTMSTLSQMLVLTVQNFVSAATGATVAAALARAFVANRGEGVGNFWADLVRTTLYLLLPLAFVVAVVLAALGLPQTLAAGVTAHTLEGAEQKISLYAVASQEAIKMLGINGGGIFNANSAHPFENPTPLTNLITAISINTLGWAAFFAFGRTVLAKKDVRALVIAAFVLLFAGAVGVYATETQAPPAQVAAQVDTSANMEGKEVRFGAPATAAWVAMTTGASNGSVNGKHSSLMPLGGGIAMFLMQLGEILPGGIGSGVAIMVVMALLSVFVAGLMVGRTPEYLGKKVEAREIQFSILAVVIIPLSMLGFSGIAAVLPEALKGLMHSGPHGLSEILYAYVSGTANNGSAFAGLTANAPWWNVTLGIAMAMGRFMPIVAVLAIAGSLVTKPKLAPTAGTLPTDGGLFIGLLIGVILILGGLQFFPAMALGPIVEHFQALDAVAALR</sequence>
<proteinExistence type="inferred from homology"/>
<evidence type="ECO:0000255" key="1">
    <source>
        <dbReference type="HAMAP-Rule" id="MF_00275"/>
    </source>
</evidence>
<name>KDPA_CAUVC</name>
<dbReference type="EMBL" id="AE005673">
    <property type="protein sequence ID" value="AAK23570.1"/>
    <property type="molecule type" value="Genomic_DNA"/>
</dbReference>
<dbReference type="PIR" id="F87446">
    <property type="entry name" value="F87446"/>
</dbReference>
<dbReference type="RefSeq" id="NP_420402.1">
    <property type="nucleotide sequence ID" value="NC_002696.2"/>
</dbReference>
<dbReference type="RefSeq" id="WP_010919465.1">
    <property type="nucleotide sequence ID" value="NC_002696.2"/>
</dbReference>
<dbReference type="SMR" id="Q9A7X8"/>
<dbReference type="STRING" id="190650.CC_1591"/>
<dbReference type="EnsemblBacteria" id="AAK23570">
    <property type="protein sequence ID" value="AAK23570"/>
    <property type="gene ID" value="CC_1591"/>
</dbReference>
<dbReference type="KEGG" id="ccr:CC_1591"/>
<dbReference type="PATRIC" id="fig|190650.5.peg.1618"/>
<dbReference type="eggNOG" id="COG2060">
    <property type="taxonomic scope" value="Bacteria"/>
</dbReference>
<dbReference type="HOGENOM" id="CLU_018614_3_0_5"/>
<dbReference type="BioCyc" id="CAULO:CC1591-MONOMER"/>
<dbReference type="Proteomes" id="UP000001816">
    <property type="component" value="Chromosome"/>
</dbReference>
<dbReference type="GO" id="GO:0005886">
    <property type="term" value="C:plasma membrane"/>
    <property type="evidence" value="ECO:0007669"/>
    <property type="project" value="UniProtKB-SubCell"/>
</dbReference>
<dbReference type="GO" id="GO:0008556">
    <property type="term" value="F:P-type potassium transmembrane transporter activity"/>
    <property type="evidence" value="ECO:0007669"/>
    <property type="project" value="InterPro"/>
</dbReference>
<dbReference type="GO" id="GO:0030955">
    <property type="term" value="F:potassium ion binding"/>
    <property type="evidence" value="ECO:0007669"/>
    <property type="project" value="UniProtKB-UniRule"/>
</dbReference>
<dbReference type="HAMAP" id="MF_00275">
    <property type="entry name" value="KdpA"/>
    <property type="match status" value="1"/>
</dbReference>
<dbReference type="InterPro" id="IPR004623">
    <property type="entry name" value="KdpA"/>
</dbReference>
<dbReference type="NCBIfam" id="TIGR00680">
    <property type="entry name" value="kdpA"/>
    <property type="match status" value="1"/>
</dbReference>
<dbReference type="PANTHER" id="PTHR30607">
    <property type="entry name" value="POTASSIUM-TRANSPORTING ATPASE A CHAIN"/>
    <property type="match status" value="1"/>
</dbReference>
<dbReference type="PANTHER" id="PTHR30607:SF2">
    <property type="entry name" value="POTASSIUM-TRANSPORTING ATPASE POTASSIUM-BINDING SUBUNIT"/>
    <property type="match status" value="1"/>
</dbReference>
<dbReference type="Pfam" id="PF03814">
    <property type="entry name" value="KdpA"/>
    <property type="match status" value="1"/>
</dbReference>
<dbReference type="PIRSF" id="PIRSF001294">
    <property type="entry name" value="K_ATPaseA"/>
    <property type="match status" value="1"/>
</dbReference>
<protein>
    <recommendedName>
        <fullName evidence="1">Potassium-transporting ATPase potassium-binding subunit</fullName>
    </recommendedName>
    <alternativeName>
        <fullName evidence="1">ATP phosphohydrolase [potassium-transporting] A chain</fullName>
    </alternativeName>
    <alternativeName>
        <fullName evidence="1">Potassium-binding and translocating subunit A</fullName>
    </alternativeName>
    <alternativeName>
        <fullName evidence="1">Potassium-translocating ATPase A chain</fullName>
    </alternativeName>
</protein>
<comment type="function">
    <text evidence="1">Part of the high-affinity ATP-driven potassium transport (or Kdp) system, which catalyzes the hydrolysis of ATP coupled with the electrogenic transport of potassium into the cytoplasm. This subunit binds the periplasmic potassium ions and delivers the ions to the membrane domain of KdpB through an intramembrane tunnel.</text>
</comment>
<comment type="subunit">
    <text evidence="1">The system is composed of three essential subunits: KdpA, KdpB and KdpC.</text>
</comment>
<comment type="subcellular location">
    <subcellularLocation>
        <location evidence="1">Cell inner membrane</location>
        <topology evidence="1">Multi-pass membrane protein</topology>
    </subcellularLocation>
</comment>
<comment type="similarity">
    <text evidence="1">Belongs to the KdpA family.</text>
</comment>
<reference key="1">
    <citation type="journal article" date="2001" name="Proc. Natl. Acad. Sci. U.S.A.">
        <title>Complete genome sequence of Caulobacter crescentus.</title>
        <authorList>
            <person name="Nierman W.C."/>
            <person name="Feldblyum T.V."/>
            <person name="Laub M.T."/>
            <person name="Paulsen I.T."/>
            <person name="Nelson K.E."/>
            <person name="Eisen J.A."/>
            <person name="Heidelberg J.F."/>
            <person name="Alley M.R.K."/>
            <person name="Ohta N."/>
            <person name="Maddock J.R."/>
            <person name="Potocka I."/>
            <person name="Nelson W.C."/>
            <person name="Newton A."/>
            <person name="Stephens C."/>
            <person name="Phadke N.D."/>
            <person name="Ely B."/>
            <person name="DeBoy R.T."/>
            <person name="Dodson R.J."/>
            <person name="Durkin A.S."/>
            <person name="Gwinn M.L."/>
            <person name="Haft D.H."/>
            <person name="Kolonay J.F."/>
            <person name="Smit J."/>
            <person name="Craven M.B."/>
            <person name="Khouri H.M."/>
            <person name="Shetty J."/>
            <person name="Berry K.J."/>
            <person name="Utterback T.R."/>
            <person name="Tran K."/>
            <person name="Wolf A.M."/>
            <person name="Vamathevan J.J."/>
            <person name="Ermolaeva M.D."/>
            <person name="White O."/>
            <person name="Salzberg S.L."/>
            <person name="Venter J.C."/>
            <person name="Shapiro L."/>
            <person name="Fraser C.M."/>
        </authorList>
    </citation>
    <scope>NUCLEOTIDE SEQUENCE [LARGE SCALE GENOMIC DNA]</scope>
    <source>
        <strain>ATCC 19089 / CIP 103742 / CB 15</strain>
    </source>
</reference>
<keyword id="KW-0997">Cell inner membrane</keyword>
<keyword id="KW-1003">Cell membrane</keyword>
<keyword id="KW-0406">Ion transport</keyword>
<keyword id="KW-0472">Membrane</keyword>
<keyword id="KW-0630">Potassium</keyword>
<keyword id="KW-0633">Potassium transport</keyword>
<keyword id="KW-1185">Reference proteome</keyword>
<keyword id="KW-0812">Transmembrane</keyword>
<keyword id="KW-1133">Transmembrane helix</keyword>
<keyword id="KW-0813">Transport</keyword>